<evidence type="ECO:0000255" key="1">
    <source>
        <dbReference type="HAMAP-Rule" id="MF_00210"/>
    </source>
</evidence>
<comment type="function">
    <text evidence="1">Catalyzes the transfer of the enolpyruvyl moiety of phosphoenolpyruvate (PEP) to the 5-hydroxyl of shikimate-3-phosphate (S3P) to produce enolpyruvyl shikimate-3-phosphate and inorganic phosphate.</text>
</comment>
<comment type="catalytic activity">
    <reaction evidence="1">
        <text>3-phosphoshikimate + phosphoenolpyruvate = 5-O-(1-carboxyvinyl)-3-phosphoshikimate + phosphate</text>
        <dbReference type="Rhea" id="RHEA:21256"/>
        <dbReference type="ChEBI" id="CHEBI:43474"/>
        <dbReference type="ChEBI" id="CHEBI:57701"/>
        <dbReference type="ChEBI" id="CHEBI:58702"/>
        <dbReference type="ChEBI" id="CHEBI:145989"/>
        <dbReference type="EC" id="2.5.1.19"/>
    </reaction>
    <physiologicalReaction direction="left-to-right" evidence="1">
        <dbReference type="Rhea" id="RHEA:21257"/>
    </physiologicalReaction>
</comment>
<comment type="pathway">
    <text evidence="1">Metabolic intermediate biosynthesis; chorismate biosynthesis; chorismate from D-erythrose 4-phosphate and phosphoenolpyruvate: step 6/7.</text>
</comment>
<comment type="subunit">
    <text evidence="1">Monomer.</text>
</comment>
<comment type="subcellular location">
    <subcellularLocation>
        <location evidence="1">Cytoplasm</location>
    </subcellularLocation>
</comment>
<comment type="similarity">
    <text evidence="1">Belongs to the EPSP synthase family.</text>
</comment>
<organism>
    <name type="scientific">Desulfitobacterium hafniense (strain Y51)</name>
    <dbReference type="NCBI Taxonomy" id="138119"/>
    <lineage>
        <taxon>Bacteria</taxon>
        <taxon>Bacillati</taxon>
        <taxon>Bacillota</taxon>
        <taxon>Clostridia</taxon>
        <taxon>Eubacteriales</taxon>
        <taxon>Desulfitobacteriaceae</taxon>
        <taxon>Desulfitobacterium</taxon>
    </lineage>
</organism>
<name>AROA_DESHY</name>
<reference key="1">
    <citation type="journal article" date="2006" name="J. Bacteriol.">
        <title>Complete genome sequence of the dehalorespiring bacterium Desulfitobacterium hafniense Y51 and comparison with Dehalococcoides ethenogenes 195.</title>
        <authorList>
            <person name="Nonaka H."/>
            <person name="Keresztes G."/>
            <person name="Shinoda Y."/>
            <person name="Ikenaga Y."/>
            <person name="Abe M."/>
            <person name="Naito K."/>
            <person name="Inatomi K."/>
            <person name="Furukawa K."/>
            <person name="Inui M."/>
            <person name="Yukawa H."/>
        </authorList>
    </citation>
    <scope>NUCLEOTIDE SEQUENCE [LARGE SCALE GENOMIC DNA]</scope>
    <source>
        <strain>Y51</strain>
    </source>
</reference>
<proteinExistence type="inferred from homology"/>
<accession>Q24V91</accession>
<sequence>MQINNESKGIRINPMGRIQGEIEVPGDKSISHRAALFGGMAQGETHITNFLLGQDCLSTLACLKTLGVEWERRDAEVWIRGRGFENWHEPQDILDVGNSGTTMRLMLGVLAGCPFSATLTGDSSIRSRPMARVTLPLQEMGARILGRQEGKYAPLTIQGGLLQGIQFRSPVASAQVKSAILLAGLRAKGETMVTEPCLSRDHTERMLRGFGVDLKSEGRTAKVRGGAALSGQEVAVPGDISSAAFFLVLGTLIPQGELLIKNVGMNPTRTGILDALWQMGADIQVEEEREECGEPRANLRVRPAQLHGIEIQGEMIPKLIDEVPVLAVAASLAQGETVIRDAAELRVKETDRIQTVVQGLQALGANAQELPDGLRIQGAKSLRGGAAHSHGDHRLAMAWVVAGLLAEEGISLQGIEAAEVSFPNFLELIHEIAES</sequence>
<protein>
    <recommendedName>
        <fullName evidence="1">3-phosphoshikimate 1-carboxyvinyltransferase</fullName>
        <ecNumber evidence="1">2.5.1.19</ecNumber>
    </recommendedName>
    <alternativeName>
        <fullName evidence="1">5-enolpyruvylshikimate-3-phosphate synthase</fullName>
        <shortName evidence="1">EPSP synthase</shortName>
        <shortName evidence="1">EPSPS</shortName>
    </alternativeName>
</protein>
<keyword id="KW-0028">Amino-acid biosynthesis</keyword>
<keyword id="KW-0057">Aromatic amino acid biosynthesis</keyword>
<keyword id="KW-0963">Cytoplasm</keyword>
<keyword id="KW-1185">Reference proteome</keyword>
<keyword id="KW-0808">Transferase</keyword>
<dbReference type="EC" id="2.5.1.19" evidence="1"/>
<dbReference type="EMBL" id="AP008230">
    <property type="protein sequence ID" value="BAE84051.1"/>
    <property type="molecule type" value="Genomic_DNA"/>
</dbReference>
<dbReference type="RefSeq" id="WP_011460209.1">
    <property type="nucleotide sequence ID" value="NC_007907.1"/>
</dbReference>
<dbReference type="SMR" id="Q24V91"/>
<dbReference type="STRING" id="138119.DSY2262"/>
<dbReference type="KEGG" id="dsy:DSY2262"/>
<dbReference type="eggNOG" id="COG0128">
    <property type="taxonomic scope" value="Bacteria"/>
</dbReference>
<dbReference type="HOGENOM" id="CLU_024321_0_1_9"/>
<dbReference type="UniPathway" id="UPA00053">
    <property type="reaction ID" value="UER00089"/>
</dbReference>
<dbReference type="Proteomes" id="UP000001946">
    <property type="component" value="Chromosome"/>
</dbReference>
<dbReference type="GO" id="GO:0005737">
    <property type="term" value="C:cytoplasm"/>
    <property type="evidence" value="ECO:0007669"/>
    <property type="project" value="UniProtKB-SubCell"/>
</dbReference>
<dbReference type="GO" id="GO:0003866">
    <property type="term" value="F:3-phosphoshikimate 1-carboxyvinyltransferase activity"/>
    <property type="evidence" value="ECO:0007669"/>
    <property type="project" value="UniProtKB-UniRule"/>
</dbReference>
<dbReference type="GO" id="GO:0008652">
    <property type="term" value="P:amino acid biosynthetic process"/>
    <property type="evidence" value="ECO:0007669"/>
    <property type="project" value="UniProtKB-KW"/>
</dbReference>
<dbReference type="GO" id="GO:0009073">
    <property type="term" value="P:aromatic amino acid family biosynthetic process"/>
    <property type="evidence" value="ECO:0007669"/>
    <property type="project" value="UniProtKB-KW"/>
</dbReference>
<dbReference type="GO" id="GO:0009423">
    <property type="term" value="P:chorismate biosynthetic process"/>
    <property type="evidence" value="ECO:0007669"/>
    <property type="project" value="UniProtKB-UniRule"/>
</dbReference>
<dbReference type="CDD" id="cd01556">
    <property type="entry name" value="EPSP_synthase"/>
    <property type="match status" value="1"/>
</dbReference>
<dbReference type="FunFam" id="3.65.10.10:FF:000005">
    <property type="entry name" value="3-phosphoshikimate 1-carboxyvinyltransferase"/>
    <property type="match status" value="1"/>
</dbReference>
<dbReference type="FunFam" id="3.65.10.10:FF:000006">
    <property type="entry name" value="3-phosphoshikimate 1-carboxyvinyltransferase"/>
    <property type="match status" value="1"/>
</dbReference>
<dbReference type="Gene3D" id="3.65.10.10">
    <property type="entry name" value="Enolpyruvate transferase domain"/>
    <property type="match status" value="2"/>
</dbReference>
<dbReference type="HAMAP" id="MF_00210">
    <property type="entry name" value="EPSP_synth"/>
    <property type="match status" value="1"/>
</dbReference>
<dbReference type="InterPro" id="IPR001986">
    <property type="entry name" value="Enolpyruvate_Tfrase_dom"/>
</dbReference>
<dbReference type="InterPro" id="IPR036968">
    <property type="entry name" value="Enolpyruvate_Tfrase_sf"/>
</dbReference>
<dbReference type="InterPro" id="IPR006264">
    <property type="entry name" value="EPSP_synthase"/>
</dbReference>
<dbReference type="InterPro" id="IPR023193">
    <property type="entry name" value="EPSP_synthase_CS"/>
</dbReference>
<dbReference type="InterPro" id="IPR013792">
    <property type="entry name" value="RNA3'P_cycl/enolpyr_Trfase_a/b"/>
</dbReference>
<dbReference type="NCBIfam" id="TIGR01356">
    <property type="entry name" value="aroA"/>
    <property type="match status" value="1"/>
</dbReference>
<dbReference type="PANTHER" id="PTHR21090">
    <property type="entry name" value="AROM/DEHYDROQUINATE SYNTHASE"/>
    <property type="match status" value="1"/>
</dbReference>
<dbReference type="PANTHER" id="PTHR21090:SF5">
    <property type="entry name" value="PENTAFUNCTIONAL AROM POLYPEPTIDE"/>
    <property type="match status" value="1"/>
</dbReference>
<dbReference type="Pfam" id="PF00275">
    <property type="entry name" value="EPSP_synthase"/>
    <property type="match status" value="1"/>
</dbReference>
<dbReference type="PIRSF" id="PIRSF000505">
    <property type="entry name" value="EPSPS"/>
    <property type="match status" value="1"/>
</dbReference>
<dbReference type="SUPFAM" id="SSF55205">
    <property type="entry name" value="EPT/RTPC-like"/>
    <property type="match status" value="1"/>
</dbReference>
<dbReference type="PROSITE" id="PS00104">
    <property type="entry name" value="EPSP_SYNTHASE_1"/>
    <property type="match status" value="1"/>
</dbReference>
<dbReference type="PROSITE" id="PS00885">
    <property type="entry name" value="EPSP_SYNTHASE_2"/>
    <property type="match status" value="1"/>
</dbReference>
<feature type="chain" id="PRO_0000325342" description="3-phosphoshikimate 1-carboxyvinyltransferase">
    <location>
        <begin position="1"/>
        <end position="435"/>
    </location>
</feature>
<feature type="active site" description="Proton acceptor" evidence="1">
    <location>
        <position position="321"/>
    </location>
</feature>
<feature type="binding site" evidence="1">
    <location>
        <position position="28"/>
    </location>
    <ligand>
        <name>3-phosphoshikimate</name>
        <dbReference type="ChEBI" id="CHEBI:145989"/>
    </ligand>
</feature>
<feature type="binding site" evidence="1">
    <location>
        <position position="28"/>
    </location>
    <ligand>
        <name>phosphoenolpyruvate</name>
        <dbReference type="ChEBI" id="CHEBI:58702"/>
    </ligand>
</feature>
<feature type="binding site" evidence="1">
    <location>
        <position position="29"/>
    </location>
    <ligand>
        <name>3-phosphoshikimate</name>
        <dbReference type="ChEBI" id="CHEBI:145989"/>
    </ligand>
</feature>
<feature type="binding site" evidence="1">
    <location>
        <position position="33"/>
    </location>
    <ligand>
        <name>3-phosphoshikimate</name>
        <dbReference type="ChEBI" id="CHEBI:145989"/>
    </ligand>
</feature>
<feature type="binding site" evidence="1">
    <location>
        <position position="100"/>
    </location>
    <ligand>
        <name>phosphoenolpyruvate</name>
        <dbReference type="ChEBI" id="CHEBI:58702"/>
    </ligand>
</feature>
<feature type="binding site" evidence="1">
    <location>
        <position position="128"/>
    </location>
    <ligand>
        <name>phosphoenolpyruvate</name>
        <dbReference type="ChEBI" id="CHEBI:58702"/>
    </ligand>
</feature>
<feature type="binding site" evidence="1">
    <location>
        <position position="173"/>
    </location>
    <ligand>
        <name>3-phosphoshikimate</name>
        <dbReference type="ChEBI" id="CHEBI:145989"/>
    </ligand>
</feature>
<feature type="binding site" evidence="1">
    <location>
        <position position="175"/>
    </location>
    <ligand>
        <name>3-phosphoshikimate</name>
        <dbReference type="ChEBI" id="CHEBI:145989"/>
    </ligand>
</feature>
<feature type="binding site" evidence="1">
    <location>
        <position position="175"/>
    </location>
    <ligand>
        <name>phosphoenolpyruvate</name>
        <dbReference type="ChEBI" id="CHEBI:58702"/>
    </ligand>
</feature>
<feature type="binding site" evidence="1">
    <location>
        <position position="321"/>
    </location>
    <ligand>
        <name>3-phosphoshikimate</name>
        <dbReference type="ChEBI" id="CHEBI:145989"/>
    </ligand>
</feature>
<feature type="binding site" evidence="1">
    <location>
        <position position="348"/>
    </location>
    <ligand>
        <name>3-phosphoshikimate</name>
        <dbReference type="ChEBI" id="CHEBI:145989"/>
    </ligand>
</feature>
<feature type="binding site" evidence="1">
    <location>
        <position position="352"/>
    </location>
    <ligand>
        <name>phosphoenolpyruvate</name>
        <dbReference type="ChEBI" id="CHEBI:58702"/>
    </ligand>
</feature>
<feature type="binding site" evidence="1">
    <location>
        <position position="394"/>
    </location>
    <ligand>
        <name>phosphoenolpyruvate</name>
        <dbReference type="ChEBI" id="CHEBI:58702"/>
    </ligand>
</feature>
<gene>
    <name evidence="1" type="primary">aroA</name>
    <name type="ordered locus">DSY2262</name>
</gene>